<accession>A1KUQ3</accession>
<proteinExistence type="inferred from homology"/>
<reference key="1">
    <citation type="journal article" date="2007" name="PLoS Genet.">
        <title>Meningococcal genetic variation mechanisms viewed through comparative analysis of serogroup C strain FAM18.</title>
        <authorList>
            <person name="Bentley S.D."/>
            <person name="Vernikos G.S."/>
            <person name="Snyder L.A.S."/>
            <person name="Churcher C."/>
            <person name="Arrowsmith C."/>
            <person name="Chillingworth T."/>
            <person name="Cronin A."/>
            <person name="Davis P.H."/>
            <person name="Holroyd N.E."/>
            <person name="Jagels K."/>
            <person name="Maddison M."/>
            <person name="Moule S."/>
            <person name="Rabbinowitsch E."/>
            <person name="Sharp S."/>
            <person name="Unwin L."/>
            <person name="Whitehead S."/>
            <person name="Quail M.A."/>
            <person name="Achtman M."/>
            <person name="Barrell B.G."/>
            <person name="Saunders N.J."/>
            <person name="Parkhill J."/>
        </authorList>
    </citation>
    <scope>NUCLEOTIDE SEQUENCE [LARGE SCALE GENOMIC DNA]</scope>
    <source>
        <strain>ATCC 700532 / DSM 15464 / FAM18</strain>
    </source>
</reference>
<protein>
    <recommendedName>
        <fullName evidence="1">DNA polymerase IV</fullName>
        <shortName evidence="1">Pol IV</shortName>
        <ecNumber evidence="1">2.7.7.7</ecNumber>
    </recommendedName>
</protein>
<feature type="chain" id="PRO_1000084904" description="DNA polymerase IV">
    <location>
        <begin position="1"/>
        <end position="352"/>
    </location>
</feature>
<feature type="domain" description="UmuC" evidence="1">
    <location>
        <begin position="6"/>
        <end position="186"/>
    </location>
</feature>
<feature type="active site" evidence="1">
    <location>
        <position position="105"/>
    </location>
</feature>
<feature type="binding site" evidence="1">
    <location>
        <position position="10"/>
    </location>
    <ligand>
        <name>Mg(2+)</name>
        <dbReference type="ChEBI" id="CHEBI:18420"/>
    </ligand>
</feature>
<feature type="binding site" evidence="1">
    <location>
        <position position="104"/>
    </location>
    <ligand>
        <name>Mg(2+)</name>
        <dbReference type="ChEBI" id="CHEBI:18420"/>
    </ligand>
</feature>
<feature type="site" description="Substrate discrimination" evidence="1">
    <location>
        <position position="15"/>
    </location>
</feature>
<comment type="function">
    <text evidence="1">Poorly processive, error-prone DNA polymerase involved in untargeted mutagenesis. Copies undamaged DNA at stalled replication forks, which arise in vivo from mismatched or misaligned primer ends. These misaligned primers can be extended by PolIV. Exhibits no 3'-5' exonuclease (proofreading) activity. May be involved in translesional synthesis, in conjunction with the beta clamp from PolIII.</text>
</comment>
<comment type="catalytic activity">
    <reaction evidence="1">
        <text>DNA(n) + a 2'-deoxyribonucleoside 5'-triphosphate = DNA(n+1) + diphosphate</text>
        <dbReference type="Rhea" id="RHEA:22508"/>
        <dbReference type="Rhea" id="RHEA-COMP:17339"/>
        <dbReference type="Rhea" id="RHEA-COMP:17340"/>
        <dbReference type="ChEBI" id="CHEBI:33019"/>
        <dbReference type="ChEBI" id="CHEBI:61560"/>
        <dbReference type="ChEBI" id="CHEBI:173112"/>
        <dbReference type="EC" id="2.7.7.7"/>
    </reaction>
</comment>
<comment type="cofactor">
    <cofactor evidence="1">
        <name>Mg(2+)</name>
        <dbReference type="ChEBI" id="CHEBI:18420"/>
    </cofactor>
    <text evidence="1">Binds 2 magnesium ions per subunit.</text>
</comment>
<comment type="subunit">
    <text evidence="1">Monomer.</text>
</comment>
<comment type="subcellular location">
    <subcellularLocation>
        <location evidence="1">Cytoplasm</location>
    </subcellularLocation>
</comment>
<comment type="similarity">
    <text evidence="1">Belongs to the DNA polymerase type-Y family.</text>
</comment>
<evidence type="ECO:0000255" key="1">
    <source>
        <dbReference type="HAMAP-Rule" id="MF_01113"/>
    </source>
</evidence>
<keyword id="KW-0963">Cytoplasm</keyword>
<keyword id="KW-0227">DNA damage</keyword>
<keyword id="KW-0234">DNA repair</keyword>
<keyword id="KW-0235">DNA replication</keyword>
<keyword id="KW-0238">DNA-binding</keyword>
<keyword id="KW-0239">DNA-directed DNA polymerase</keyword>
<keyword id="KW-0460">Magnesium</keyword>
<keyword id="KW-0479">Metal-binding</keyword>
<keyword id="KW-0515">Mutator protein</keyword>
<keyword id="KW-0548">Nucleotidyltransferase</keyword>
<keyword id="KW-0808">Transferase</keyword>
<dbReference type="EC" id="2.7.7.7" evidence="1"/>
<dbReference type="EMBL" id="AM421808">
    <property type="protein sequence ID" value="CAM10601.1"/>
    <property type="molecule type" value="Genomic_DNA"/>
</dbReference>
<dbReference type="RefSeq" id="WP_002221144.1">
    <property type="nucleotide sequence ID" value="NC_008767.1"/>
</dbReference>
<dbReference type="SMR" id="A1KUQ3"/>
<dbReference type="KEGG" id="nmc:NMC1386"/>
<dbReference type="HOGENOM" id="CLU_012348_1_2_4"/>
<dbReference type="Proteomes" id="UP000002286">
    <property type="component" value="Chromosome"/>
</dbReference>
<dbReference type="GO" id="GO:0005829">
    <property type="term" value="C:cytosol"/>
    <property type="evidence" value="ECO:0007669"/>
    <property type="project" value="TreeGrafter"/>
</dbReference>
<dbReference type="GO" id="GO:0003684">
    <property type="term" value="F:damaged DNA binding"/>
    <property type="evidence" value="ECO:0007669"/>
    <property type="project" value="InterPro"/>
</dbReference>
<dbReference type="GO" id="GO:0003887">
    <property type="term" value="F:DNA-directed DNA polymerase activity"/>
    <property type="evidence" value="ECO:0007669"/>
    <property type="project" value="UniProtKB-UniRule"/>
</dbReference>
<dbReference type="GO" id="GO:0000287">
    <property type="term" value="F:magnesium ion binding"/>
    <property type="evidence" value="ECO:0007669"/>
    <property type="project" value="UniProtKB-UniRule"/>
</dbReference>
<dbReference type="GO" id="GO:0006261">
    <property type="term" value="P:DNA-templated DNA replication"/>
    <property type="evidence" value="ECO:0007669"/>
    <property type="project" value="UniProtKB-UniRule"/>
</dbReference>
<dbReference type="GO" id="GO:0042276">
    <property type="term" value="P:error-prone translesion synthesis"/>
    <property type="evidence" value="ECO:0007669"/>
    <property type="project" value="TreeGrafter"/>
</dbReference>
<dbReference type="GO" id="GO:0009432">
    <property type="term" value="P:SOS response"/>
    <property type="evidence" value="ECO:0007669"/>
    <property type="project" value="TreeGrafter"/>
</dbReference>
<dbReference type="CDD" id="cd03586">
    <property type="entry name" value="PolY_Pol_IV_kappa"/>
    <property type="match status" value="1"/>
</dbReference>
<dbReference type="FunFam" id="1.10.150.20:FF:000019">
    <property type="entry name" value="DNA polymerase IV"/>
    <property type="match status" value="1"/>
</dbReference>
<dbReference type="FunFam" id="3.30.1490.100:FF:000004">
    <property type="entry name" value="DNA polymerase IV"/>
    <property type="match status" value="1"/>
</dbReference>
<dbReference type="FunFam" id="3.30.70.270:FF:000070">
    <property type="entry name" value="DNA polymerase IV"/>
    <property type="match status" value="1"/>
</dbReference>
<dbReference type="FunFam" id="3.40.1170.60:FF:000001">
    <property type="entry name" value="DNA polymerase IV"/>
    <property type="match status" value="1"/>
</dbReference>
<dbReference type="Gene3D" id="3.30.70.270">
    <property type="match status" value="3"/>
</dbReference>
<dbReference type="Gene3D" id="3.40.1170.60">
    <property type="match status" value="1"/>
</dbReference>
<dbReference type="Gene3D" id="1.10.150.20">
    <property type="entry name" value="5' to 3' exonuclease, C-terminal subdomain"/>
    <property type="match status" value="1"/>
</dbReference>
<dbReference type="Gene3D" id="3.30.1490.100">
    <property type="entry name" value="DNA polymerase, Y-family, little finger domain"/>
    <property type="match status" value="1"/>
</dbReference>
<dbReference type="HAMAP" id="MF_01113">
    <property type="entry name" value="DNApol_IV"/>
    <property type="match status" value="1"/>
</dbReference>
<dbReference type="InterPro" id="IPR043502">
    <property type="entry name" value="DNA/RNA_pol_sf"/>
</dbReference>
<dbReference type="InterPro" id="IPR036775">
    <property type="entry name" value="DNA_pol_Y-fam_lit_finger_sf"/>
</dbReference>
<dbReference type="InterPro" id="IPR017961">
    <property type="entry name" value="DNA_pol_Y-fam_little_finger"/>
</dbReference>
<dbReference type="InterPro" id="IPR050116">
    <property type="entry name" value="DNA_polymerase-Y"/>
</dbReference>
<dbReference type="InterPro" id="IPR022880">
    <property type="entry name" value="DNApol_IV"/>
</dbReference>
<dbReference type="InterPro" id="IPR053848">
    <property type="entry name" value="IMS_HHH_1"/>
</dbReference>
<dbReference type="InterPro" id="IPR043128">
    <property type="entry name" value="Rev_trsase/Diguanyl_cyclase"/>
</dbReference>
<dbReference type="InterPro" id="IPR001126">
    <property type="entry name" value="UmuC"/>
</dbReference>
<dbReference type="NCBIfam" id="NF002677">
    <property type="entry name" value="PRK02406.1"/>
    <property type="match status" value="1"/>
</dbReference>
<dbReference type="PANTHER" id="PTHR11076:SF33">
    <property type="entry name" value="DNA POLYMERASE KAPPA"/>
    <property type="match status" value="1"/>
</dbReference>
<dbReference type="PANTHER" id="PTHR11076">
    <property type="entry name" value="DNA REPAIR POLYMERASE UMUC / TRANSFERASE FAMILY MEMBER"/>
    <property type="match status" value="1"/>
</dbReference>
<dbReference type="Pfam" id="PF00817">
    <property type="entry name" value="IMS"/>
    <property type="match status" value="1"/>
</dbReference>
<dbReference type="Pfam" id="PF11799">
    <property type="entry name" value="IMS_C"/>
    <property type="match status" value="1"/>
</dbReference>
<dbReference type="Pfam" id="PF21999">
    <property type="entry name" value="IMS_HHH_1"/>
    <property type="match status" value="1"/>
</dbReference>
<dbReference type="SUPFAM" id="SSF56672">
    <property type="entry name" value="DNA/RNA polymerases"/>
    <property type="match status" value="1"/>
</dbReference>
<dbReference type="SUPFAM" id="SSF100879">
    <property type="entry name" value="Lesion bypass DNA polymerase (Y-family), little finger domain"/>
    <property type="match status" value="1"/>
</dbReference>
<dbReference type="PROSITE" id="PS50173">
    <property type="entry name" value="UMUC"/>
    <property type="match status" value="1"/>
</dbReference>
<sequence length="352" mass="39624">MSSRKIIHIDMDAFYASVELREQPHLKGRPVVVAWEGARSVICAASYEARQFGLHSAMSVATAKRLCPQAVYVPPHFDLYRQVSAQIHAVFRRYTDLIEPLSLDEAYLDVTRNFKNIPYASEVAKEIRAAIFAETGLTASAGIAPNKFLAKIASDWRKPNGQFVLPPHKVMAFLETLPLGKIPGVGKVTLKKMQSLGMRTAGDLRRFERGELLNHFGRYGYRLYDLVRGTDERPVKAERERLQISTEITLPEDLPLEQAAGHLPHLAEDLWRQITRKNVEAQSVTLKLKTYDFRIITRTLTYSSVLPDCAALLQAAQMLIARVPPQTEDAFRLIGIGVGHLVPKNQQQDLWA</sequence>
<organism>
    <name type="scientific">Neisseria meningitidis serogroup C / serotype 2a (strain ATCC 700532 / DSM 15464 / FAM18)</name>
    <dbReference type="NCBI Taxonomy" id="272831"/>
    <lineage>
        <taxon>Bacteria</taxon>
        <taxon>Pseudomonadati</taxon>
        <taxon>Pseudomonadota</taxon>
        <taxon>Betaproteobacteria</taxon>
        <taxon>Neisseriales</taxon>
        <taxon>Neisseriaceae</taxon>
        <taxon>Neisseria</taxon>
    </lineage>
</organism>
<name>DPO4_NEIMF</name>
<gene>
    <name evidence="1" type="primary">dinB</name>
    <name type="ordered locus">NMC1386</name>
</gene>